<comment type="function">
    <text>Cleaves collagens of types I, II, and III at one site in the helical domain. Also cleaves collagens of types VII and X. May play a role in the deterioration of the heart wall extracellular matrix proteins during the onset of dilated cardiomyopathy.</text>
</comment>
<comment type="catalytic activity">
    <reaction>
        <text>Cleavage of the triple helix of collagen at about three-quarters of the length of the molecule from the N-terminus, at 775-Gly-|-Ile-776 in the alpha1(I) chain. Cleaves synthetic substrates and alpha-macroglobulins at bonds where P1' is a hydrophobic residue.</text>
        <dbReference type="EC" id="3.4.24.7"/>
    </reaction>
</comment>
<comment type="cofactor">
    <cofactor evidence="1">
        <name>Ca(2+)</name>
        <dbReference type="ChEBI" id="CHEBI:29108"/>
    </cofactor>
    <text evidence="1">Binds 4 Ca(2+) ions per subunit.</text>
</comment>
<comment type="cofactor">
    <cofactor evidence="1">
        <name>Zn(2+)</name>
        <dbReference type="ChEBI" id="CHEBI:29105"/>
    </cofactor>
    <text evidence="1">Binds 2 Zn(2+) ions per subunit.</text>
</comment>
<comment type="activity regulation">
    <text>Can be activated without removal of the activation peptide.</text>
</comment>
<comment type="subcellular location">
    <subcellularLocation>
        <location evidence="1">Secreted</location>
        <location evidence="1">Extracellular space</location>
        <location evidence="1">Extracellular matrix</location>
    </subcellularLocation>
</comment>
<comment type="PTM">
    <text>The N-terminus is blocked.</text>
</comment>
<comment type="PTM">
    <text evidence="2">Tyrosine phosphorylated in platelets by PKDCC/VLK.</text>
</comment>
<comment type="similarity">
    <text evidence="3">Belongs to the peptidase M10A family.</text>
</comment>
<organism>
    <name type="scientific">Rattus norvegicus</name>
    <name type="common">Rat</name>
    <dbReference type="NCBI Taxonomy" id="10116"/>
    <lineage>
        <taxon>Eukaryota</taxon>
        <taxon>Metazoa</taxon>
        <taxon>Chordata</taxon>
        <taxon>Craniata</taxon>
        <taxon>Vertebrata</taxon>
        <taxon>Euteleostomi</taxon>
        <taxon>Mammalia</taxon>
        <taxon>Eutheria</taxon>
        <taxon>Euarchontoglires</taxon>
        <taxon>Glires</taxon>
        <taxon>Rodentia</taxon>
        <taxon>Myomorpha</taxon>
        <taxon>Muroidea</taxon>
        <taxon>Muridae</taxon>
        <taxon>Murinae</taxon>
        <taxon>Rattus</taxon>
    </lineage>
</organism>
<accession>P81563</accession>
<feature type="chain" id="PRO_0000078182" description="Interstitial collagenase">
    <location>
        <begin position="1" status="less than"/>
        <end position="15" status="greater than"/>
    </location>
</feature>
<feature type="non-terminal residue">
    <location>
        <position position="1"/>
    </location>
</feature>
<feature type="non-terminal residue">
    <location>
        <position position="15"/>
    </location>
</feature>
<protein>
    <recommendedName>
        <fullName>Interstitial collagenase</fullName>
        <ecNumber>3.4.24.7</ecNumber>
    </recommendedName>
    <alternativeName>
        <fullName>Fibroblast collagenase</fullName>
    </alternativeName>
    <alternativeName>
        <fullName>Matrix metalloproteinase-1</fullName>
        <shortName>MMP-1</shortName>
    </alternativeName>
    <alternativeName>
        <fullName>Myocardial collagenase</fullName>
    </alternativeName>
</protein>
<reference key="1">
    <citation type="journal article" date="1996" name="Can. J. Cardiol.">
        <title>Myocardial collagenase: purification and structural characterization.</title>
        <authorList>
            <person name="Tyagi S.C."/>
            <person name="Cleutjens J.P.M."/>
        </authorList>
    </citation>
    <scope>PROTEIN SEQUENCE</scope>
    <source>
        <tissue>Heart</tissue>
    </source>
</reference>
<proteinExistence type="evidence at protein level"/>
<name>MMP1_RAT</name>
<keyword id="KW-0106">Calcium</keyword>
<keyword id="KW-0177">Collagen degradation</keyword>
<keyword id="KW-0903">Direct protein sequencing</keyword>
<keyword id="KW-0272">Extracellular matrix</keyword>
<keyword id="KW-0378">Hydrolase</keyword>
<keyword id="KW-0482">Metalloprotease</keyword>
<keyword id="KW-0597">Phosphoprotein</keyword>
<keyword id="KW-0645">Protease</keyword>
<keyword id="KW-1185">Reference proteome</keyword>
<keyword id="KW-0964">Secreted</keyword>
<keyword id="KW-0862">Zinc</keyword>
<sequence length="15" mass="1787">DTLKSEKNADFKDLY</sequence>
<evidence type="ECO:0000250" key="1"/>
<evidence type="ECO:0000250" key="2">
    <source>
        <dbReference type="UniProtKB" id="P03956"/>
    </source>
</evidence>
<evidence type="ECO:0000305" key="3"/>
<gene>
    <name type="primary">Mmp1</name>
</gene>
<dbReference type="EC" id="3.4.24.7"/>
<dbReference type="PhosphoSitePlus" id="P81563"/>
<dbReference type="AGR" id="RGD:1307917"/>
<dbReference type="RGD" id="1307917">
    <property type="gene designation" value="Mmp1"/>
</dbReference>
<dbReference type="InParanoid" id="P81563"/>
<dbReference type="BRENDA" id="3.4.24.7">
    <property type="organism ID" value="5301"/>
</dbReference>
<dbReference type="Proteomes" id="UP000002494">
    <property type="component" value="Unplaced"/>
</dbReference>
<dbReference type="GO" id="GO:0005615">
    <property type="term" value="C:extracellular space"/>
    <property type="evidence" value="ECO:0000314"/>
    <property type="project" value="RGD"/>
</dbReference>
<dbReference type="GO" id="GO:0004175">
    <property type="term" value="F:endopeptidase activity"/>
    <property type="evidence" value="ECO:0000266"/>
    <property type="project" value="RGD"/>
</dbReference>
<dbReference type="GO" id="GO:0004222">
    <property type="term" value="F:metalloendopeptidase activity"/>
    <property type="evidence" value="ECO:0000266"/>
    <property type="project" value="RGD"/>
</dbReference>
<dbReference type="GO" id="GO:0008233">
    <property type="term" value="F:peptidase activity"/>
    <property type="evidence" value="ECO:0000314"/>
    <property type="project" value="RGD"/>
</dbReference>
<dbReference type="GO" id="GO:0071312">
    <property type="term" value="P:cellular response to alkaloid"/>
    <property type="evidence" value="ECO:0000270"/>
    <property type="project" value="RGD"/>
</dbReference>
<dbReference type="GO" id="GO:0071498">
    <property type="term" value="P:cellular response to fluid shear stress"/>
    <property type="evidence" value="ECO:0000270"/>
    <property type="project" value="RGD"/>
</dbReference>
<dbReference type="GO" id="GO:0071347">
    <property type="term" value="P:cellular response to interleukin-1"/>
    <property type="evidence" value="ECO:0000270"/>
    <property type="project" value="RGD"/>
</dbReference>
<dbReference type="GO" id="GO:0071283">
    <property type="term" value="P:cellular response to iron(III) ion"/>
    <property type="evidence" value="ECO:0000270"/>
    <property type="project" value="RGD"/>
</dbReference>
<dbReference type="GO" id="GO:0071222">
    <property type="term" value="P:cellular response to lipopolysaccharide"/>
    <property type="evidence" value="ECO:0000270"/>
    <property type="project" value="RGD"/>
</dbReference>
<dbReference type="GO" id="GO:0071375">
    <property type="term" value="P:cellular response to peptide hormone stimulus"/>
    <property type="evidence" value="ECO:0000270"/>
    <property type="project" value="RGD"/>
</dbReference>
<dbReference type="GO" id="GO:0071356">
    <property type="term" value="P:cellular response to tumor necrosis factor"/>
    <property type="evidence" value="ECO:0000270"/>
    <property type="project" value="RGD"/>
</dbReference>
<dbReference type="GO" id="GO:0071492">
    <property type="term" value="P:cellular response to UV-A"/>
    <property type="evidence" value="ECO:0000266"/>
    <property type="project" value="RGD"/>
</dbReference>
<dbReference type="GO" id="GO:0071305">
    <property type="term" value="P:cellular response to vitamin D"/>
    <property type="evidence" value="ECO:0000270"/>
    <property type="project" value="RGD"/>
</dbReference>
<dbReference type="GO" id="GO:0071466">
    <property type="term" value="P:cellular response to xenobiotic stimulus"/>
    <property type="evidence" value="ECO:0000270"/>
    <property type="project" value="RGD"/>
</dbReference>
<dbReference type="GO" id="GO:0030574">
    <property type="term" value="P:collagen catabolic process"/>
    <property type="evidence" value="ECO:0007669"/>
    <property type="project" value="UniProtKB-KW"/>
</dbReference>
<dbReference type="GO" id="GO:0001553">
    <property type="term" value="P:luteinization"/>
    <property type="evidence" value="ECO:0000270"/>
    <property type="project" value="RGD"/>
</dbReference>
<dbReference type="GO" id="GO:0001554">
    <property type="term" value="P:luteolysis"/>
    <property type="evidence" value="ECO:0000270"/>
    <property type="project" value="RGD"/>
</dbReference>
<dbReference type="GO" id="GO:0010763">
    <property type="term" value="P:positive regulation of fibroblast migration"/>
    <property type="evidence" value="ECO:0000315"/>
    <property type="project" value="RGD"/>
</dbReference>
<dbReference type="GO" id="GO:0031334">
    <property type="term" value="P:positive regulation of protein-containing complex assembly"/>
    <property type="evidence" value="ECO:0000266"/>
    <property type="project" value="RGD"/>
</dbReference>
<dbReference type="GO" id="GO:0014911">
    <property type="term" value="P:positive regulation of smooth muscle cell migration"/>
    <property type="evidence" value="ECO:0000315"/>
    <property type="project" value="RGD"/>
</dbReference>
<dbReference type="GO" id="GO:0006508">
    <property type="term" value="P:proteolysis"/>
    <property type="evidence" value="ECO:0000266"/>
    <property type="project" value="RGD"/>
</dbReference>
<dbReference type="GO" id="GO:0014854">
    <property type="term" value="P:response to inactivity"/>
    <property type="evidence" value="ECO:0000270"/>
    <property type="project" value="RGD"/>
</dbReference>
<dbReference type="GO" id="GO:0071680">
    <property type="term" value="P:response to indole-3-methanol"/>
    <property type="evidence" value="ECO:0000270"/>
    <property type="project" value="RGD"/>
</dbReference>
<dbReference type="GO" id="GO:0009612">
    <property type="term" value="P:response to mechanical stimulus"/>
    <property type="evidence" value="ECO:0000270"/>
    <property type="project" value="RGD"/>
</dbReference>
<dbReference type="GO" id="GO:0009410">
    <property type="term" value="P:response to xenobiotic stimulus"/>
    <property type="evidence" value="ECO:0000270"/>
    <property type="project" value="RGD"/>
</dbReference>